<keyword id="KW-0966">Cell projection</keyword>
<keyword id="KW-1186">Ciliopathy</keyword>
<keyword id="KW-0969">Cilium</keyword>
<keyword id="KW-0175">Coiled coil</keyword>
<keyword id="KW-0963">Cytoplasm</keyword>
<keyword id="KW-0990">Primary ciliary dyskinesia</keyword>
<keyword id="KW-1185">Reference proteome</keyword>
<name>CCD40_DANRE</name>
<reference key="1">
    <citation type="journal article" date="2013" name="Nature">
        <title>The zebrafish reference genome sequence and its relationship to the human genome.</title>
        <authorList>
            <person name="Howe K."/>
            <person name="Clark M.D."/>
            <person name="Torroja C.F."/>
            <person name="Torrance J."/>
            <person name="Berthelot C."/>
            <person name="Muffato M."/>
            <person name="Collins J.E."/>
            <person name="Humphray S."/>
            <person name="McLaren K."/>
            <person name="Matthews L."/>
            <person name="McLaren S."/>
            <person name="Sealy I."/>
            <person name="Caccamo M."/>
            <person name="Churcher C."/>
            <person name="Scott C."/>
            <person name="Barrett J.C."/>
            <person name="Koch R."/>
            <person name="Rauch G.J."/>
            <person name="White S."/>
            <person name="Chow W."/>
            <person name="Kilian B."/>
            <person name="Quintais L.T."/>
            <person name="Guerra-Assuncao J.A."/>
            <person name="Zhou Y."/>
            <person name="Gu Y."/>
            <person name="Yen J."/>
            <person name="Vogel J.H."/>
            <person name="Eyre T."/>
            <person name="Redmond S."/>
            <person name="Banerjee R."/>
            <person name="Chi J."/>
            <person name="Fu B."/>
            <person name="Langley E."/>
            <person name="Maguire S.F."/>
            <person name="Laird G.K."/>
            <person name="Lloyd D."/>
            <person name="Kenyon E."/>
            <person name="Donaldson S."/>
            <person name="Sehra H."/>
            <person name="Almeida-King J."/>
            <person name="Loveland J."/>
            <person name="Trevanion S."/>
            <person name="Jones M."/>
            <person name="Quail M."/>
            <person name="Willey D."/>
            <person name="Hunt A."/>
            <person name="Burton J."/>
            <person name="Sims S."/>
            <person name="McLay K."/>
            <person name="Plumb B."/>
            <person name="Davis J."/>
            <person name="Clee C."/>
            <person name="Oliver K."/>
            <person name="Clark R."/>
            <person name="Riddle C."/>
            <person name="Elliot D."/>
            <person name="Threadgold G."/>
            <person name="Harden G."/>
            <person name="Ware D."/>
            <person name="Begum S."/>
            <person name="Mortimore B."/>
            <person name="Kerry G."/>
            <person name="Heath P."/>
            <person name="Phillimore B."/>
            <person name="Tracey A."/>
            <person name="Corby N."/>
            <person name="Dunn M."/>
            <person name="Johnson C."/>
            <person name="Wood J."/>
            <person name="Clark S."/>
            <person name="Pelan S."/>
            <person name="Griffiths G."/>
            <person name="Smith M."/>
            <person name="Glithero R."/>
            <person name="Howden P."/>
            <person name="Barker N."/>
            <person name="Lloyd C."/>
            <person name="Stevens C."/>
            <person name="Harley J."/>
            <person name="Holt K."/>
            <person name="Panagiotidis G."/>
            <person name="Lovell J."/>
            <person name="Beasley H."/>
            <person name="Henderson C."/>
            <person name="Gordon D."/>
            <person name="Auger K."/>
            <person name="Wright D."/>
            <person name="Collins J."/>
            <person name="Raisen C."/>
            <person name="Dyer L."/>
            <person name="Leung K."/>
            <person name="Robertson L."/>
            <person name="Ambridge K."/>
            <person name="Leongamornlert D."/>
            <person name="McGuire S."/>
            <person name="Gilderthorp R."/>
            <person name="Griffiths C."/>
            <person name="Manthravadi D."/>
            <person name="Nichol S."/>
            <person name="Barker G."/>
            <person name="Whitehead S."/>
            <person name="Kay M."/>
            <person name="Brown J."/>
            <person name="Murnane C."/>
            <person name="Gray E."/>
            <person name="Humphries M."/>
            <person name="Sycamore N."/>
            <person name="Barker D."/>
            <person name="Saunders D."/>
            <person name="Wallis J."/>
            <person name="Babbage A."/>
            <person name="Hammond S."/>
            <person name="Mashreghi-Mohammadi M."/>
            <person name="Barr L."/>
            <person name="Martin S."/>
            <person name="Wray P."/>
            <person name="Ellington A."/>
            <person name="Matthews N."/>
            <person name="Ellwood M."/>
            <person name="Woodmansey R."/>
            <person name="Clark G."/>
            <person name="Cooper J."/>
            <person name="Tromans A."/>
            <person name="Grafham D."/>
            <person name="Skuce C."/>
            <person name="Pandian R."/>
            <person name="Andrews R."/>
            <person name="Harrison E."/>
            <person name="Kimberley A."/>
            <person name="Garnett J."/>
            <person name="Fosker N."/>
            <person name="Hall R."/>
            <person name="Garner P."/>
            <person name="Kelly D."/>
            <person name="Bird C."/>
            <person name="Palmer S."/>
            <person name="Gehring I."/>
            <person name="Berger A."/>
            <person name="Dooley C.M."/>
            <person name="Ersan-Urun Z."/>
            <person name="Eser C."/>
            <person name="Geiger H."/>
            <person name="Geisler M."/>
            <person name="Karotki L."/>
            <person name="Kirn A."/>
            <person name="Konantz J."/>
            <person name="Konantz M."/>
            <person name="Oberlander M."/>
            <person name="Rudolph-Geiger S."/>
            <person name="Teucke M."/>
            <person name="Lanz C."/>
            <person name="Raddatz G."/>
            <person name="Osoegawa K."/>
            <person name="Zhu B."/>
            <person name="Rapp A."/>
            <person name="Widaa S."/>
            <person name="Langford C."/>
            <person name="Yang F."/>
            <person name="Schuster S.C."/>
            <person name="Carter N.P."/>
            <person name="Harrow J."/>
            <person name="Ning Z."/>
            <person name="Herrero J."/>
            <person name="Searle S.M."/>
            <person name="Enright A."/>
            <person name="Geisler R."/>
            <person name="Plasterk R.H."/>
            <person name="Lee C."/>
            <person name="Westerfield M."/>
            <person name="de Jong P.J."/>
            <person name="Zon L.I."/>
            <person name="Postlethwait J.H."/>
            <person name="Nusslein-Volhard C."/>
            <person name="Hubbard T.J."/>
            <person name="Roest Crollius H."/>
            <person name="Rogers J."/>
            <person name="Stemple D.L."/>
        </authorList>
    </citation>
    <scope>NUCLEOTIDE SEQUENCE [LARGE SCALE GENOMIC DNA]</scope>
    <source>
        <strain>Tuebingen</strain>
    </source>
</reference>
<reference key="2">
    <citation type="submission" date="2005-03" db="EMBL/GenBank/DDBJ databases">
        <authorList>
            <consortium name="NIH - Zebrafish Gene Collection (ZGC) project"/>
        </authorList>
    </citation>
    <scope>NUCLEOTIDE SEQUENCE [LARGE SCALE MRNA] OF 337-941</scope>
    <source>
        <tissue>Embryo</tissue>
    </source>
</reference>
<reference key="3">
    <citation type="journal article" date="2011" name="Nat. Genet.">
        <title>CCDC39 is required for assembly of inner dynein arms and the dynein regulatory complex and for normal ciliary motility in humans and dogs.</title>
        <authorList>
            <person name="Merveille A.C."/>
            <person name="Davis E.E."/>
            <person name="Becker-Heck A."/>
            <person name="Legendre M."/>
            <person name="Amirav I."/>
            <person name="Bataille G."/>
            <person name="Belmont J."/>
            <person name="Beydon N."/>
            <person name="Billen F."/>
            <person name="Clement A."/>
            <person name="Clercx C."/>
            <person name="Coste A."/>
            <person name="Crosbie R."/>
            <person name="de Blic J."/>
            <person name="Deleuze S."/>
            <person name="Duquesnoy P."/>
            <person name="Escalier D."/>
            <person name="Escudier E."/>
            <person name="Fliegauf M."/>
            <person name="Horvath J."/>
            <person name="Hill K."/>
            <person name="Jorissen M."/>
            <person name="Just J."/>
            <person name="Kispert A."/>
            <person name="Lathrop M."/>
            <person name="Loges N.T."/>
            <person name="Marthin J.K."/>
            <person name="Momozawa Y."/>
            <person name="Montantin G."/>
            <person name="Nielsen K.G."/>
            <person name="Olbrich H."/>
            <person name="Papon J.F."/>
            <person name="Rayet I."/>
            <person name="Roger G."/>
            <person name="Schmidts M."/>
            <person name="Tenreiro H."/>
            <person name="Towbin J.A."/>
            <person name="Zelenika D."/>
            <person name="Zentgraf H."/>
            <person name="Georges M."/>
            <person name="Lequarre A.S."/>
            <person name="Katsanis N."/>
            <person name="Omran H."/>
            <person name="Amselem S."/>
        </authorList>
    </citation>
    <scope>DISRUPTION PHENOTYPE</scope>
    <scope>TISSUE SPECIFICITY</scope>
</reference>
<gene>
    <name type="primary">ccdc40</name>
    <name evidence="7" type="synonym">lok</name>
</gene>
<dbReference type="EMBL" id="BX005286">
    <property type="status" value="NOT_ANNOTATED_CDS"/>
    <property type="molecule type" value="Genomic_DNA"/>
</dbReference>
<dbReference type="EMBL" id="CR854963">
    <property type="status" value="NOT_ANNOTATED_CDS"/>
    <property type="molecule type" value="Genomic_DNA"/>
</dbReference>
<dbReference type="EMBL" id="BC092181">
    <property type="protein sequence ID" value="AAH92181.1"/>
    <property type="molecule type" value="mRNA"/>
</dbReference>
<dbReference type="RefSeq" id="NP_001258742.1">
    <property type="nucleotide sequence ID" value="NM_001271813.1"/>
</dbReference>
<dbReference type="SMR" id="Q56A40"/>
<dbReference type="FunCoup" id="Q56A40">
    <property type="interactions" value="86"/>
</dbReference>
<dbReference type="STRING" id="7955.ENSDARP00000139124"/>
<dbReference type="PaxDb" id="7955-ENSDARP00000121686"/>
<dbReference type="Ensembl" id="ENSDART00000169752">
    <property type="protein sequence ID" value="ENSDARP00000139124"/>
    <property type="gene ID" value="ENSDARG00000100584"/>
</dbReference>
<dbReference type="GeneID" id="568590"/>
<dbReference type="KEGG" id="dre:568590"/>
<dbReference type="AGR" id="ZFIN:ZDB-GENE-060503-723"/>
<dbReference type="CTD" id="55036"/>
<dbReference type="ZFIN" id="ZDB-GENE-060503-723">
    <property type="gene designation" value="ccdc40"/>
</dbReference>
<dbReference type="eggNOG" id="ENOG502QQ91">
    <property type="taxonomic scope" value="Eukaryota"/>
</dbReference>
<dbReference type="HOGENOM" id="CLU_008826_1_0_1"/>
<dbReference type="InParanoid" id="Q56A40"/>
<dbReference type="OMA" id="YIVRHQY"/>
<dbReference type="OrthoDB" id="188741at2759"/>
<dbReference type="PhylomeDB" id="Q56A40"/>
<dbReference type="TreeFam" id="TF325559"/>
<dbReference type="PRO" id="PR:Q56A40"/>
<dbReference type="Proteomes" id="UP000000437">
    <property type="component" value="Alternate scaffold 6"/>
</dbReference>
<dbReference type="Proteomes" id="UP000000437">
    <property type="component" value="Chromosome 6"/>
</dbReference>
<dbReference type="Bgee" id="ENSDARG00000100584">
    <property type="expression patterns" value="Expressed in testis and 24 other cell types or tissues"/>
</dbReference>
<dbReference type="GO" id="GO:0005929">
    <property type="term" value="C:cilium"/>
    <property type="evidence" value="ECO:0000250"/>
    <property type="project" value="UniProtKB"/>
</dbReference>
<dbReference type="GO" id="GO:0005737">
    <property type="term" value="C:cytoplasm"/>
    <property type="evidence" value="ECO:0000250"/>
    <property type="project" value="UniProtKB"/>
</dbReference>
<dbReference type="GO" id="GO:0005576">
    <property type="term" value="C:extracellular region"/>
    <property type="evidence" value="ECO:0007669"/>
    <property type="project" value="GOC"/>
</dbReference>
<dbReference type="GO" id="GO:0070286">
    <property type="term" value="P:axonemal dynein complex assembly"/>
    <property type="evidence" value="ECO:0000250"/>
    <property type="project" value="UniProtKB"/>
</dbReference>
<dbReference type="GO" id="GO:0035082">
    <property type="term" value="P:axoneme assembly"/>
    <property type="evidence" value="ECO:0000315"/>
    <property type="project" value="ZFIN"/>
</dbReference>
<dbReference type="GO" id="GO:0060271">
    <property type="term" value="P:cilium assembly"/>
    <property type="evidence" value="ECO:0000315"/>
    <property type="project" value="ZFIN"/>
</dbReference>
<dbReference type="GO" id="GO:0003341">
    <property type="term" value="P:cilium movement"/>
    <property type="evidence" value="ECO:0000315"/>
    <property type="project" value="UniProtKB"/>
</dbReference>
<dbReference type="GO" id="GO:0007368">
    <property type="term" value="P:determination of left/right symmetry"/>
    <property type="evidence" value="ECO:0000315"/>
    <property type="project" value="ZFIN"/>
</dbReference>
<dbReference type="GO" id="GO:0003143">
    <property type="term" value="P:embryonic heart tube morphogenesis"/>
    <property type="evidence" value="ECO:0000315"/>
    <property type="project" value="ZFIN"/>
</dbReference>
<dbReference type="GO" id="GO:0060287">
    <property type="term" value="P:epithelial cilium movement involved in determination of left/right asymmetry"/>
    <property type="evidence" value="ECO:0000315"/>
    <property type="project" value="UniProtKB"/>
</dbReference>
<dbReference type="GO" id="GO:0003351">
    <property type="term" value="P:epithelial cilium movement involved in extracellular fluid movement"/>
    <property type="evidence" value="ECO:0000315"/>
    <property type="project" value="ZFIN"/>
</dbReference>
<dbReference type="GO" id="GO:0003146">
    <property type="term" value="P:heart jogging"/>
    <property type="evidence" value="ECO:0000315"/>
    <property type="project" value="ZFIN"/>
</dbReference>
<dbReference type="GO" id="GO:0001947">
    <property type="term" value="P:heart looping"/>
    <property type="evidence" value="ECO:0000315"/>
    <property type="project" value="ZFIN"/>
</dbReference>
<dbReference type="GO" id="GO:0048793">
    <property type="term" value="P:pronephros development"/>
    <property type="evidence" value="ECO:0000315"/>
    <property type="project" value="ZFIN"/>
</dbReference>
<dbReference type="InterPro" id="IPR037386">
    <property type="entry name" value="CCDC40"/>
</dbReference>
<dbReference type="PANTHER" id="PTHR16275">
    <property type="entry name" value="COILED-COIL DOMAIN-CONTAINING PROTEIN 40"/>
    <property type="match status" value="1"/>
</dbReference>
<dbReference type="PANTHER" id="PTHR16275:SF8">
    <property type="entry name" value="COILED-COIL DOMAIN-CONTAINING PROTEIN 40"/>
    <property type="match status" value="1"/>
</dbReference>
<dbReference type="Pfam" id="PF08647">
    <property type="entry name" value="BRE1"/>
    <property type="match status" value="1"/>
</dbReference>
<dbReference type="SUPFAM" id="SSF57997">
    <property type="entry name" value="Tropomyosin"/>
    <property type="match status" value="1"/>
</dbReference>
<evidence type="ECO:0000250" key="1">
    <source>
        <dbReference type="UniProtKB" id="A8IQT2"/>
    </source>
</evidence>
<evidence type="ECO:0000250" key="2">
    <source>
        <dbReference type="UniProtKB" id="Q4G0X9"/>
    </source>
</evidence>
<evidence type="ECO:0000250" key="3">
    <source>
        <dbReference type="UniProtKB" id="Q8BI79"/>
    </source>
</evidence>
<evidence type="ECO:0000255" key="4"/>
<evidence type="ECO:0000256" key="5">
    <source>
        <dbReference type="SAM" id="MobiDB-lite"/>
    </source>
</evidence>
<evidence type="ECO:0000269" key="6">
    <source>
    </source>
</evidence>
<evidence type="ECO:0000303" key="7">
    <source>
    </source>
</evidence>
<evidence type="ECO:0000305" key="8"/>
<feature type="chain" id="PRO_0000405821" description="Coiled-coil domain-containing protein 40">
    <location>
        <begin position="1"/>
        <end position="941"/>
    </location>
</feature>
<feature type="region of interest" description="Disordered" evidence="5">
    <location>
        <begin position="1"/>
        <end position="31"/>
    </location>
</feature>
<feature type="coiled-coil region" evidence="4">
    <location>
        <begin position="130"/>
        <end position="154"/>
    </location>
</feature>
<feature type="coiled-coil region" evidence="4">
    <location>
        <begin position="210"/>
        <end position="430"/>
    </location>
</feature>
<feature type="coiled-coil region" evidence="4">
    <location>
        <begin position="548"/>
        <end position="572"/>
    </location>
</feature>
<feature type="coiled-coil region" evidence="4">
    <location>
        <begin position="609"/>
        <end position="765"/>
    </location>
</feature>
<feature type="coiled-coil region" evidence="4">
    <location>
        <begin position="814"/>
        <end position="856"/>
    </location>
</feature>
<feature type="coiled-coil region" evidence="4">
    <location>
        <begin position="895"/>
        <end position="915"/>
    </location>
</feature>
<feature type="compositionally biased region" description="Basic and acidic residues" evidence="5">
    <location>
        <begin position="1"/>
        <end position="14"/>
    </location>
</feature>
<feature type="sequence conflict" description="In Ref. 2; AAH92181." evidence="8" ref="2">
    <original>I</original>
    <variation>G</variation>
    <location>
        <position position="337"/>
    </location>
</feature>
<feature type="sequence conflict" description="In Ref. 2; AAH92181." evidence="8" ref="2">
    <original>F</original>
    <variation>L</variation>
    <location>
        <position position="466"/>
    </location>
</feature>
<feature type="sequence conflict" description="In Ref. 2; AAH92181." evidence="8" ref="2">
    <original>R</original>
    <variation>Q</variation>
    <location>
        <position position="730"/>
    </location>
</feature>
<feature type="sequence conflict" description="In Ref. 2; AAH92181." evidence="8" ref="2">
    <original>K</original>
    <variation>E</variation>
    <location>
        <position position="765"/>
    </location>
</feature>
<feature type="sequence conflict" description="In Ref. 2; AAH92181." evidence="8" ref="2">
    <original>H</original>
    <variation>Q</variation>
    <location>
        <position position="780"/>
    </location>
</feature>
<feature type="sequence conflict" description="In Ref. 2; AAH92181." evidence="8" ref="2">
    <original>I</original>
    <variation>T</variation>
    <location>
        <position position="854"/>
    </location>
</feature>
<feature type="sequence conflict" description="In Ref. 2; AAH92181." evidence="8" ref="2">
    <original>P</original>
    <variation>A</variation>
    <location>
        <position position="882"/>
    </location>
</feature>
<comment type="function">
    <text evidence="1 2">Required for assembly of dynein regulatory complex (DRC) and inner dynein arm (IDA) complexes, which are responsible for ciliary beat regulation, thereby playing a central role in motility in cilia and flagella. Probably acts together with ccdc39 to form a molecular ruler that determines the 96 nanometer (nm) repeat length and arrangements of components in cilia and flagella.</text>
</comment>
<comment type="subcellular location">
    <subcellularLocation>
        <location evidence="3">Cytoplasm</location>
    </subcellularLocation>
    <subcellularLocation>
        <location evidence="3">Cell projection</location>
        <location evidence="3">Cilium</location>
    </subcellularLocation>
    <text evidence="3">Localizes to cytoplasm and motile cilium.</text>
</comment>
<comment type="tissue specificity">
    <text evidence="6">Expressed in tissues that contain motile cilia, including Kupffer's vesicle, the floorplate, the pronephric tubules and the otic vesicle.</text>
</comment>
<comment type="disruption phenotype">
    <text evidence="6">Defects are the cause of the lok phenotype, a phenotype related to primary ciliary dyskinesia (PCD). PCD is characterized by curly-tail down phenotype, laterality defects and pronephric cysts, but without defects in sensory cilia and without the presence of hydrocephalus.</text>
</comment>
<comment type="similarity">
    <text evidence="8">Belongs to the CCDC40 family.</text>
</comment>
<protein>
    <recommendedName>
        <fullName evidence="8">Coiled-coil domain-containing protein 40</fullName>
    </recommendedName>
    <alternativeName>
        <fullName evidence="7">Protein locke</fullName>
    </alternativeName>
</protein>
<organism>
    <name type="scientific">Danio rerio</name>
    <name type="common">Zebrafish</name>
    <name type="synonym">Brachydanio rerio</name>
    <dbReference type="NCBI Taxonomy" id="7955"/>
    <lineage>
        <taxon>Eukaryota</taxon>
        <taxon>Metazoa</taxon>
        <taxon>Chordata</taxon>
        <taxon>Craniata</taxon>
        <taxon>Vertebrata</taxon>
        <taxon>Euteleostomi</taxon>
        <taxon>Actinopterygii</taxon>
        <taxon>Neopterygii</taxon>
        <taxon>Teleostei</taxon>
        <taxon>Ostariophysi</taxon>
        <taxon>Cypriniformes</taxon>
        <taxon>Danionidae</taxon>
        <taxon>Danioninae</taxon>
        <taxon>Danio</taxon>
    </lineage>
</organism>
<sequence>MEGRQEDQMNRQEEVEQSNNYDRSVDHARTGRSSWIDNSEINSKWIPQHSLQLEMNNIEGEGSVRENDEEEEEIVVLDPEHPLMKRFQTALKNNFTNQLERLNLDLCEKVVVEKAEAQRRHDLAEEVYMVQEMLARLQASLEVCQETNSEAAAQHRQAEDHLYVVKNQYQDTASQTNVQRLQVLELQSKVDNLALKLLYMQEAKSDLCSDIKAIINASNKAQKERTQTEEQKHQQDIYVERLTNRVEKLLEQISLYDLQLISQTEQTRAAKDSLSEAQLELDSVIVEHRQLLQQWKSSLLMMKRRDEAYTAMQEELRQANDQMLSLDTEIESYKKSITQEEEQNECLTLRLNRGQTDCTTSRKLITHSQNLQEVLQAQLSTYTRILQETENTLSTLHGNLEMHQSALKALRKQMEKVSAVRLDLESQIMNKLQEQLTHNNAAKYSRRMNDKTAVYRREKEAQLIKFENDFNTVTLEGQELATHLDSLLAFQAELEQKSTQRHLLLSSREEEIVKQITDIERKQATISIYNKKIKDIVSSTGHEDLGPLEIHAATLSKELEEVGAKIKECQQLWLWQQGELVRFTQEKQAHSSSVQILQTQLTILQQGKIRRESEMEQDQSELADLDKQIKVLMADMVKLNSLLNKNSDLNHALQQSSNLMETEFRQRLKEAEKDSAETQLKLERLNEEKERLINSLVEAERQVMLWGKRTQLMQETCSAIDSDIGQGDIRTMRAEIHRMEVRYAQLMKQQERLLRDMESVVAKSKTIAVWSEAQARTQAHKQPTHNDYHNTIQSLRRKILQTKKQTEECDGVIAQLEERLGSMTSRLQDKQMHLNNIQNTEAFLSQDLRRLQEIKERNLYRLPVLQTRAKHLHAVKEGRYTPMATGVTALELGTHKQEERLKMVSLTLQRLAQEYPQHHSTLHRMNSILAEHLHGECPNSQ</sequence>
<accession>Q56A40</accession>
<proteinExistence type="evidence at transcript level"/>